<comment type="function">
    <text evidence="1">Catalyzes the transfer of the enolpyruvyl moiety of phosphoenolpyruvate (PEP) to the 5-hydroxyl of shikimate-3-phosphate (S3P) to produce enolpyruvyl shikimate-3-phosphate and inorganic phosphate.</text>
</comment>
<comment type="catalytic activity">
    <reaction evidence="1">
        <text>3-phosphoshikimate + phosphoenolpyruvate = 5-O-(1-carboxyvinyl)-3-phosphoshikimate + phosphate</text>
        <dbReference type="Rhea" id="RHEA:21256"/>
        <dbReference type="ChEBI" id="CHEBI:43474"/>
        <dbReference type="ChEBI" id="CHEBI:57701"/>
        <dbReference type="ChEBI" id="CHEBI:58702"/>
        <dbReference type="ChEBI" id="CHEBI:145989"/>
        <dbReference type="EC" id="2.5.1.19"/>
    </reaction>
    <physiologicalReaction direction="left-to-right" evidence="1">
        <dbReference type="Rhea" id="RHEA:21257"/>
    </physiologicalReaction>
</comment>
<comment type="pathway">
    <text evidence="1">Metabolic intermediate biosynthesis; chorismate biosynthesis.</text>
</comment>
<comment type="subunit">
    <text evidence="1">Monomer.</text>
</comment>
<comment type="subcellular location">
    <subcellularLocation>
        <location evidence="1">Cytoplasm</location>
    </subcellularLocation>
</comment>
<comment type="similarity">
    <text evidence="1">Belongs to the EPSP synthase family.</text>
</comment>
<organism>
    <name type="scientific">Korarchaeum cryptofilum (strain OPF8)</name>
    <dbReference type="NCBI Taxonomy" id="374847"/>
    <lineage>
        <taxon>Archaea</taxon>
        <taxon>Thermoproteota</taxon>
        <taxon>Candidatus Korarchaeia</taxon>
        <taxon>Candidatus Korarchaeales</taxon>
        <taxon>Candidatus Korarchaeaceae</taxon>
        <taxon>Candidatus Korarchaeum</taxon>
    </lineage>
</organism>
<reference key="1">
    <citation type="journal article" date="2008" name="Proc. Natl. Acad. Sci. U.S.A.">
        <title>A korarchaeal genome reveals new insights into the evolution of the Archaea.</title>
        <authorList>
            <person name="Elkins J.G."/>
            <person name="Podar M."/>
            <person name="Graham D.E."/>
            <person name="Makarova K.S."/>
            <person name="Wolf Y."/>
            <person name="Randau L."/>
            <person name="Hedlund B.P."/>
            <person name="Brochier-Armanet C."/>
            <person name="Kunin V."/>
            <person name="Anderson I."/>
            <person name="Lapidus A."/>
            <person name="Goltsman E."/>
            <person name="Barry K."/>
            <person name="Koonin E.V."/>
            <person name="Hugenholtz P."/>
            <person name="Kyrpides N."/>
            <person name="Wanner G."/>
            <person name="Richardson P."/>
            <person name="Keller M."/>
            <person name="Stetter K.O."/>
        </authorList>
    </citation>
    <scope>NUCLEOTIDE SEQUENCE [LARGE SCALE GENOMIC DNA]</scope>
    <source>
        <strain>OPF8</strain>
    </source>
</reference>
<dbReference type="EC" id="2.5.1.19" evidence="1"/>
<dbReference type="EMBL" id="CP000968">
    <property type="protein sequence ID" value="ACB07794.1"/>
    <property type="molecule type" value="Genomic_DNA"/>
</dbReference>
<dbReference type="RefSeq" id="WP_012309691.1">
    <property type="nucleotide sequence ID" value="NC_010482.1"/>
</dbReference>
<dbReference type="SMR" id="B1L5R5"/>
<dbReference type="FunCoup" id="B1L5R5">
    <property type="interactions" value="97"/>
</dbReference>
<dbReference type="STRING" id="374847.Kcr_1048"/>
<dbReference type="EnsemblBacteria" id="ACB07794">
    <property type="protein sequence ID" value="ACB07794"/>
    <property type="gene ID" value="Kcr_1048"/>
</dbReference>
<dbReference type="GeneID" id="6094325"/>
<dbReference type="KEGG" id="kcr:Kcr_1048"/>
<dbReference type="eggNOG" id="arCOG04134">
    <property type="taxonomic scope" value="Archaea"/>
</dbReference>
<dbReference type="HOGENOM" id="CLU_024321_0_0_2"/>
<dbReference type="InParanoid" id="B1L5R5"/>
<dbReference type="OrthoDB" id="43788at2157"/>
<dbReference type="PhylomeDB" id="B1L5R5"/>
<dbReference type="UniPathway" id="UPA00053"/>
<dbReference type="Proteomes" id="UP000001686">
    <property type="component" value="Chromosome"/>
</dbReference>
<dbReference type="GO" id="GO:0005737">
    <property type="term" value="C:cytoplasm"/>
    <property type="evidence" value="ECO:0007669"/>
    <property type="project" value="UniProtKB-SubCell"/>
</dbReference>
<dbReference type="GO" id="GO:0003866">
    <property type="term" value="F:3-phosphoshikimate 1-carboxyvinyltransferase activity"/>
    <property type="evidence" value="ECO:0000318"/>
    <property type="project" value="GO_Central"/>
</dbReference>
<dbReference type="GO" id="GO:0008652">
    <property type="term" value="P:amino acid biosynthetic process"/>
    <property type="evidence" value="ECO:0007669"/>
    <property type="project" value="UniProtKB-KW"/>
</dbReference>
<dbReference type="GO" id="GO:0009073">
    <property type="term" value="P:aromatic amino acid family biosynthetic process"/>
    <property type="evidence" value="ECO:0007669"/>
    <property type="project" value="UniProtKB-KW"/>
</dbReference>
<dbReference type="GO" id="GO:0009423">
    <property type="term" value="P:chorismate biosynthetic process"/>
    <property type="evidence" value="ECO:0000318"/>
    <property type="project" value="GO_Central"/>
</dbReference>
<dbReference type="CDD" id="cd01556">
    <property type="entry name" value="EPSP_synthase"/>
    <property type="match status" value="1"/>
</dbReference>
<dbReference type="FunFam" id="3.65.10.10:FF:000010">
    <property type="entry name" value="3-phosphoshikimate 1-carboxyvinyltransferase"/>
    <property type="match status" value="1"/>
</dbReference>
<dbReference type="Gene3D" id="3.65.10.10">
    <property type="entry name" value="Enolpyruvate transferase domain"/>
    <property type="match status" value="2"/>
</dbReference>
<dbReference type="HAMAP" id="MF_00210">
    <property type="entry name" value="EPSP_synth"/>
    <property type="match status" value="1"/>
</dbReference>
<dbReference type="InterPro" id="IPR001986">
    <property type="entry name" value="Enolpyruvate_Tfrase_dom"/>
</dbReference>
<dbReference type="InterPro" id="IPR036968">
    <property type="entry name" value="Enolpyruvate_Tfrase_sf"/>
</dbReference>
<dbReference type="InterPro" id="IPR006264">
    <property type="entry name" value="EPSP_synthase"/>
</dbReference>
<dbReference type="InterPro" id="IPR023193">
    <property type="entry name" value="EPSP_synthase_CS"/>
</dbReference>
<dbReference type="InterPro" id="IPR013792">
    <property type="entry name" value="RNA3'P_cycl/enolpyr_Trfase_a/b"/>
</dbReference>
<dbReference type="NCBIfam" id="TIGR01356">
    <property type="entry name" value="aroA"/>
    <property type="match status" value="1"/>
</dbReference>
<dbReference type="PANTHER" id="PTHR21090">
    <property type="entry name" value="AROM/DEHYDROQUINATE SYNTHASE"/>
    <property type="match status" value="1"/>
</dbReference>
<dbReference type="PANTHER" id="PTHR21090:SF5">
    <property type="entry name" value="PENTAFUNCTIONAL AROM POLYPEPTIDE"/>
    <property type="match status" value="1"/>
</dbReference>
<dbReference type="Pfam" id="PF00275">
    <property type="entry name" value="EPSP_synthase"/>
    <property type="match status" value="1"/>
</dbReference>
<dbReference type="PIRSF" id="PIRSF000505">
    <property type="entry name" value="EPSPS"/>
    <property type="match status" value="1"/>
</dbReference>
<dbReference type="SUPFAM" id="SSF55205">
    <property type="entry name" value="EPT/RTPC-like"/>
    <property type="match status" value="1"/>
</dbReference>
<dbReference type="PROSITE" id="PS00104">
    <property type="entry name" value="EPSP_SYNTHASE_1"/>
    <property type="match status" value="1"/>
</dbReference>
<name>AROA_KORCO</name>
<proteinExistence type="inferred from homology"/>
<protein>
    <recommendedName>
        <fullName evidence="1">3-phosphoshikimate 1-carboxyvinyltransferase</fullName>
        <ecNumber evidence="1">2.5.1.19</ecNumber>
    </recommendedName>
    <alternativeName>
        <fullName evidence="1">5-enolpyruvylshikimate-3-phosphate synthase</fullName>
        <shortName evidence="1">EPSP synthase</shortName>
        <shortName evidence="1">EPSPS</shortName>
    </alternativeName>
</protein>
<accession>B1L5R5</accession>
<keyword id="KW-0028">Amino-acid biosynthesis</keyword>
<keyword id="KW-0057">Aromatic amino acid biosynthesis</keyword>
<keyword id="KW-0963">Cytoplasm</keyword>
<keyword id="KW-1185">Reference proteome</keyword>
<keyword id="KW-0808">Transferase</keyword>
<feature type="chain" id="PRO_1000204166" description="3-phosphoshikimate 1-carboxyvinyltransferase">
    <location>
        <begin position="1"/>
        <end position="423"/>
    </location>
</feature>
<feature type="active site" description="Proton acceptor" evidence="1">
    <location>
        <position position="304"/>
    </location>
</feature>
<feature type="binding site" evidence="1">
    <location>
        <position position="19"/>
    </location>
    <ligand>
        <name>3-phosphoshikimate</name>
        <dbReference type="ChEBI" id="CHEBI:145989"/>
    </ligand>
</feature>
<feature type="binding site" evidence="1">
    <location>
        <position position="19"/>
    </location>
    <ligand>
        <name>phosphoenolpyruvate</name>
        <dbReference type="ChEBI" id="CHEBI:58702"/>
    </ligand>
</feature>
<feature type="binding site" evidence="1">
    <location>
        <position position="20"/>
    </location>
    <ligand>
        <name>3-phosphoshikimate</name>
        <dbReference type="ChEBI" id="CHEBI:145989"/>
    </ligand>
</feature>
<feature type="binding site" evidence="1">
    <location>
        <position position="24"/>
    </location>
    <ligand>
        <name>3-phosphoshikimate</name>
        <dbReference type="ChEBI" id="CHEBI:145989"/>
    </ligand>
</feature>
<feature type="binding site" evidence="1">
    <location>
        <position position="89"/>
    </location>
    <ligand>
        <name>phosphoenolpyruvate</name>
        <dbReference type="ChEBI" id="CHEBI:58702"/>
    </ligand>
</feature>
<feature type="binding site" evidence="1">
    <location>
        <position position="118"/>
    </location>
    <ligand>
        <name>phosphoenolpyruvate</name>
        <dbReference type="ChEBI" id="CHEBI:58702"/>
    </ligand>
</feature>
<feature type="binding site" evidence="1">
    <location>
        <position position="164"/>
    </location>
    <ligand>
        <name>3-phosphoshikimate</name>
        <dbReference type="ChEBI" id="CHEBI:145989"/>
    </ligand>
</feature>
<feature type="binding site" evidence="1">
    <location>
        <position position="165"/>
    </location>
    <ligand>
        <name>3-phosphoshikimate</name>
        <dbReference type="ChEBI" id="CHEBI:145989"/>
    </ligand>
</feature>
<feature type="binding site" evidence="1">
    <location>
        <position position="166"/>
    </location>
    <ligand>
        <name>3-phosphoshikimate</name>
        <dbReference type="ChEBI" id="CHEBI:145989"/>
    </ligand>
</feature>
<feature type="binding site" evidence="1">
    <location>
        <position position="166"/>
    </location>
    <ligand>
        <name>phosphoenolpyruvate</name>
        <dbReference type="ChEBI" id="CHEBI:58702"/>
    </ligand>
</feature>
<feature type="binding site" evidence="1">
    <location>
        <position position="192"/>
    </location>
    <ligand>
        <name>3-phosphoshikimate</name>
        <dbReference type="ChEBI" id="CHEBI:145989"/>
    </ligand>
</feature>
<feature type="binding site" evidence="1">
    <location>
        <position position="304"/>
    </location>
    <ligand>
        <name>3-phosphoshikimate</name>
        <dbReference type="ChEBI" id="CHEBI:145989"/>
    </ligand>
</feature>
<feature type="binding site" evidence="1">
    <location>
        <position position="331"/>
    </location>
    <ligand>
        <name>3-phosphoshikimate</name>
        <dbReference type="ChEBI" id="CHEBI:145989"/>
    </ligand>
</feature>
<feature type="binding site" evidence="1">
    <location>
        <position position="335"/>
    </location>
    <ligand>
        <name>phosphoenolpyruvate</name>
        <dbReference type="ChEBI" id="CHEBI:58702"/>
    </ligand>
</feature>
<feature type="binding site" evidence="1">
    <location>
        <position position="377"/>
    </location>
    <ligand>
        <name>phosphoenolpyruvate</name>
        <dbReference type="ChEBI" id="CHEBI:58702"/>
    </ligand>
</feature>
<gene>
    <name evidence="1" type="primary">aroA</name>
    <name type="ordered locus">Kcr_1048</name>
</gene>
<sequence length="423" mass="45450">MIEVKPSQAQGSVRAPPSKSYSHRALAVSLLCEAPSKIENISRARDVIATINAIKSFGAKLSDNLTEIKIEPPQRPSIPDDVIDCGGSGTTIRFFAPISTLTEGGYTVLTGNDSLRRRPMGPIIDAINKLGGWAISSRMNGLPPLIVRGGGLKGGEVEIDGSISSQFFSGLMIASTRFERGLKIKPIGELVSRPYLEMTKEVLRRSGSHVELNEEIKVEPVPPKGLEFKIPGDYGLAAFHMLTASVTGGKVIVEDLDSTVPQADYAAIDVLRSFGVEVQEVGSRVIVEGRPKRGSKLNLKDSPDIFPIACVLASFVSEISEIRGVAHARVKESDRVANMASELKKVGVEVKELYDGLVIRGGSPKGGVKLDSHGDHRIFMALLALAAATREGCIIEGEDSVADSYPSFLEDSMKLGIDVRYNL</sequence>
<evidence type="ECO:0000255" key="1">
    <source>
        <dbReference type="HAMAP-Rule" id="MF_00210"/>
    </source>
</evidence>